<feature type="chain" id="PRO_1000012281" description="Lipoyl synthase">
    <location>
        <begin position="1"/>
        <end position="321"/>
    </location>
</feature>
<feature type="domain" description="Radical SAM core" evidence="2">
    <location>
        <begin position="80"/>
        <end position="297"/>
    </location>
</feature>
<feature type="binding site" evidence="1">
    <location>
        <position position="68"/>
    </location>
    <ligand>
        <name>[4Fe-4S] cluster</name>
        <dbReference type="ChEBI" id="CHEBI:49883"/>
        <label>1</label>
    </ligand>
</feature>
<feature type="binding site" evidence="1">
    <location>
        <position position="73"/>
    </location>
    <ligand>
        <name>[4Fe-4S] cluster</name>
        <dbReference type="ChEBI" id="CHEBI:49883"/>
        <label>1</label>
    </ligand>
</feature>
<feature type="binding site" evidence="1">
    <location>
        <position position="79"/>
    </location>
    <ligand>
        <name>[4Fe-4S] cluster</name>
        <dbReference type="ChEBI" id="CHEBI:49883"/>
        <label>1</label>
    </ligand>
</feature>
<feature type="binding site" evidence="1">
    <location>
        <position position="94"/>
    </location>
    <ligand>
        <name>[4Fe-4S] cluster</name>
        <dbReference type="ChEBI" id="CHEBI:49883"/>
        <label>2</label>
        <note>4Fe-4S-S-AdoMet</note>
    </ligand>
</feature>
<feature type="binding site" evidence="1">
    <location>
        <position position="98"/>
    </location>
    <ligand>
        <name>[4Fe-4S] cluster</name>
        <dbReference type="ChEBI" id="CHEBI:49883"/>
        <label>2</label>
        <note>4Fe-4S-S-AdoMet</note>
    </ligand>
</feature>
<feature type="binding site" evidence="1">
    <location>
        <position position="101"/>
    </location>
    <ligand>
        <name>[4Fe-4S] cluster</name>
        <dbReference type="ChEBI" id="CHEBI:49883"/>
        <label>2</label>
        <note>4Fe-4S-S-AdoMet</note>
    </ligand>
</feature>
<feature type="binding site" evidence="1">
    <location>
        <position position="308"/>
    </location>
    <ligand>
        <name>[4Fe-4S] cluster</name>
        <dbReference type="ChEBI" id="CHEBI:49883"/>
        <label>1</label>
    </ligand>
</feature>
<organism>
    <name type="scientific">Shewanella sp. (strain W3-18-1)</name>
    <dbReference type="NCBI Taxonomy" id="351745"/>
    <lineage>
        <taxon>Bacteria</taxon>
        <taxon>Pseudomonadati</taxon>
        <taxon>Pseudomonadota</taxon>
        <taxon>Gammaproteobacteria</taxon>
        <taxon>Alteromonadales</taxon>
        <taxon>Shewanellaceae</taxon>
        <taxon>Shewanella</taxon>
    </lineage>
</organism>
<accession>A1RGT2</accession>
<gene>
    <name evidence="1" type="primary">lipA</name>
    <name type="ordered locus">Sputw3181_1027</name>
</gene>
<sequence>MNRPERLQPGVKLRDADKVSRIPVKIVPSERDTMLRKPDWLRVKLPASNQRILDIKQALRSNGLHSVCEEASCPNLAECFNHGTATFMILGAICTRRCPFCDVAHGRPLKPDAEEPVKLAQTIRDMKLKYVVITSVDRDDLRDGGAQHFADCIREIRKLNPAIKIEILVPDFRGRIDAALDILATEPPDVFNHNLETAPMHYRKARPGANYQWSLDLLKRFKERHPNVPTKSGLMMGLGETNEEIAQVLRDLREHKVEMLTLGQYLQPSKFHLPVERYVPPAEFDELKALADELGFTHAACGPLVRSSYHADLQAQGKEVK</sequence>
<keyword id="KW-0004">4Fe-4S</keyword>
<keyword id="KW-0963">Cytoplasm</keyword>
<keyword id="KW-0408">Iron</keyword>
<keyword id="KW-0411">Iron-sulfur</keyword>
<keyword id="KW-0479">Metal-binding</keyword>
<keyword id="KW-0949">S-adenosyl-L-methionine</keyword>
<keyword id="KW-0808">Transferase</keyword>
<dbReference type="EC" id="2.8.1.8" evidence="1"/>
<dbReference type="EMBL" id="CP000503">
    <property type="protein sequence ID" value="ABM23877.1"/>
    <property type="molecule type" value="Genomic_DNA"/>
</dbReference>
<dbReference type="RefSeq" id="WP_011788402.1">
    <property type="nucleotide sequence ID" value="NC_008750.1"/>
</dbReference>
<dbReference type="SMR" id="A1RGT2"/>
<dbReference type="GeneID" id="67444498"/>
<dbReference type="KEGG" id="shw:Sputw3181_1027"/>
<dbReference type="HOGENOM" id="CLU_033144_2_1_6"/>
<dbReference type="UniPathway" id="UPA00538">
    <property type="reaction ID" value="UER00593"/>
</dbReference>
<dbReference type="Proteomes" id="UP000002597">
    <property type="component" value="Chromosome"/>
</dbReference>
<dbReference type="GO" id="GO:0005737">
    <property type="term" value="C:cytoplasm"/>
    <property type="evidence" value="ECO:0007669"/>
    <property type="project" value="UniProtKB-SubCell"/>
</dbReference>
<dbReference type="GO" id="GO:0051539">
    <property type="term" value="F:4 iron, 4 sulfur cluster binding"/>
    <property type="evidence" value="ECO:0007669"/>
    <property type="project" value="UniProtKB-UniRule"/>
</dbReference>
<dbReference type="GO" id="GO:0016992">
    <property type="term" value="F:lipoate synthase activity"/>
    <property type="evidence" value="ECO:0007669"/>
    <property type="project" value="UniProtKB-UniRule"/>
</dbReference>
<dbReference type="GO" id="GO:0046872">
    <property type="term" value="F:metal ion binding"/>
    <property type="evidence" value="ECO:0007669"/>
    <property type="project" value="UniProtKB-KW"/>
</dbReference>
<dbReference type="CDD" id="cd01335">
    <property type="entry name" value="Radical_SAM"/>
    <property type="match status" value="1"/>
</dbReference>
<dbReference type="FunFam" id="3.20.20.70:FF:000023">
    <property type="entry name" value="Lipoyl synthase"/>
    <property type="match status" value="1"/>
</dbReference>
<dbReference type="Gene3D" id="3.20.20.70">
    <property type="entry name" value="Aldolase class I"/>
    <property type="match status" value="1"/>
</dbReference>
<dbReference type="HAMAP" id="MF_00206">
    <property type="entry name" value="Lipoyl_synth"/>
    <property type="match status" value="1"/>
</dbReference>
<dbReference type="InterPro" id="IPR013785">
    <property type="entry name" value="Aldolase_TIM"/>
</dbReference>
<dbReference type="InterPro" id="IPR006638">
    <property type="entry name" value="Elp3/MiaA/NifB-like_rSAM"/>
</dbReference>
<dbReference type="InterPro" id="IPR003698">
    <property type="entry name" value="Lipoyl_synth"/>
</dbReference>
<dbReference type="InterPro" id="IPR007197">
    <property type="entry name" value="rSAM"/>
</dbReference>
<dbReference type="NCBIfam" id="TIGR00510">
    <property type="entry name" value="lipA"/>
    <property type="match status" value="1"/>
</dbReference>
<dbReference type="NCBIfam" id="NF004019">
    <property type="entry name" value="PRK05481.1"/>
    <property type="match status" value="1"/>
</dbReference>
<dbReference type="NCBIfam" id="NF009544">
    <property type="entry name" value="PRK12928.1"/>
    <property type="match status" value="1"/>
</dbReference>
<dbReference type="PANTHER" id="PTHR10949">
    <property type="entry name" value="LIPOYL SYNTHASE"/>
    <property type="match status" value="1"/>
</dbReference>
<dbReference type="PANTHER" id="PTHR10949:SF0">
    <property type="entry name" value="LIPOYL SYNTHASE, MITOCHONDRIAL"/>
    <property type="match status" value="1"/>
</dbReference>
<dbReference type="Pfam" id="PF04055">
    <property type="entry name" value="Radical_SAM"/>
    <property type="match status" value="1"/>
</dbReference>
<dbReference type="PIRSF" id="PIRSF005963">
    <property type="entry name" value="Lipoyl_synth"/>
    <property type="match status" value="1"/>
</dbReference>
<dbReference type="SFLD" id="SFLDF00271">
    <property type="entry name" value="lipoyl_synthase"/>
    <property type="match status" value="1"/>
</dbReference>
<dbReference type="SFLD" id="SFLDG01058">
    <property type="entry name" value="lipoyl_synthase_like"/>
    <property type="match status" value="1"/>
</dbReference>
<dbReference type="SMART" id="SM00729">
    <property type="entry name" value="Elp3"/>
    <property type="match status" value="1"/>
</dbReference>
<dbReference type="SUPFAM" id="SSF102114">
    <property type="entry name" value="Radical SAM enzymes"/>
    <property type="match status" value="1"/>
</dbReference>
<dbReference type="PROSITE" id="PS51918">
    <property type="entry name" value="RADICAL_SAM"/>
    <property type="match status" value="1"/>
</dbReference>
<evidence type="ECO:0000255" key="1">
    <source>
        <dbReference type="HAMAP-Rule" id="MF_00206"/>
    </source>
</evidence>
<evidence type="ECO:0000255" key="2">
    <source>
        <dbReference type="PROSITE-ProRule" id="PRU01266"/>
    </source>
</evidence>
<name>LIPA_SHESW</name>
<comment type="function">
    <text evidence="1">Catalyzes the radical-mediated insertion of two sulfur atoms into the C-6 and C-8 positions of the octanoyl moiety bound to the lipoyl domains of lipoate-dependent enzymes, thereby converting the octanoylated domains into lipoylated derivatives.</text>
</comment>
<comment type="catalytic activity">
    <reaction evidence="1">
        <text>[[Fe-S] cluster scaffold protein carrying a second [4Fe-4S](2+) cluster] + N(6)-octanoyl-L-lysyl-[protein] + 2 oxidized [2Fe-2S]-[ferredoxin] + 2 S-adenosyl-L-methionine + 4 H(+) = [[Fe-S] cluster scaffold protein] + N(6)-[(R)-dihydrolipoyl]-L-lysyl-[protein] + 4 Fe(3+) + 2 hydrogen sulfide + 2 5'-deoxyadenosine + 2 L-methionine + 2 reduced [2Fe-2S]-[ferredoxin]</text>
        <dbReference type="Rhea" id="RHEA:16585"/>
        <dbReference type="Rhea" id="RHEA-COMP:9928"/>
        <dbReference type="Rhea" id="RHEA-COMP:10000"/>
        <dbReference type="Rhea" id="RHEA-COMP:10001"/>
        <dbReference type="Rhea" id="RHEA-COMP:10475"/>
        <dbReference type="Rhea" id="RHEA-COMP:14568"/>
        <dbReference type="Rhea" id="RHEA-COMP:14569"/>
        <dbReference type="ChEBI" id="CHEBI:15378"/>
        <dbReference type="ChEBI" id="CHEBI:17319"/>
        <dbReference type="ChEBI" id="CHEBI:29034"/>
        <dbReference type="ChEBI" id="CHEBI:29919"/>
        <dbReference type="ChEBI" id="CHEBI:33722"/>
        <dbReference type="ChEBI" id="CHEBI:33737"/>
        <dbReference type="ChEBI" id="CHEBI:33738"/>
        <dbReference type="ChEBI" id="CHEBI:57844"/>
        <dbReference type="ChEBI" id="CHEBI:59789"/>
        <dbReference type="ChEBI" id="CHEBI:78809"/>
        <dbReference type="ChEBI" id="CHEBI:83100"/>
        <dbReference type="EC" id="2.8.1.8"/>
    </reaction>
</comment>
<comment type="cofactor">
    <cofactor evidence="1">
        <name>[4Fe-4S] cluster</name>
        <dbReference type="ChEBI" id="CHEBI:49883"/>
    </cofactor>
    <text evidence="1">Binds 2 [4Fe-4S] clusters per subunit. One cluster is coordinated with 3 cysteines and an exchangeable S-adenosyl-L-methionine.</text>
</comment>
<comment type="pathway">
    <text evidence="1">Protein modification; protein lipoylation via endogenous pathway; protein N(6)-(lipoyl)lysine from octanoyl-[acyl-carrier-protein]: step 2/2.</text>
</comment>
<comment type="subcellular location">
    <subcellularLocation>
        <location evidence="1">Cytoplasm</location>
    </subcellularLocation>
</comment>
<comment type="similarity">
    <text evidence="1">Belongs to the radical SAM superfamily. Lipoyl synthase family.</text>
</comment>
<reference key="1">
    <citation type="submission" date="2006-12" db="EMBL/GenBank/DDBJ databases">
        <title>Complete sequence of Shewanella sp. W3-18-1.</title>
        <authorList>
            <consortium name="US DOE Joint Genome Institute"/>
            <person name="Copeland A."/>
            <person name="Lucas S."/>
            <person name="Lapidus A."/>
            <person name="Barry K."/>
            <person name="Detter J.C."/>
            <person name="Glavina del Rio T."/>
            <person name="Hammon N."/>
            <person name="Israni S."/>
            <person name="Dalin E."/>
            <person name="Tice H."/>
            <person name="Pitluck S."/>
            <person name="Chain P."/>
            <person name="Malfatti S."/>
            <person name="Shin M."/>
            <person name="Vergez L."/>
            <person name="Schmutz J."/>
            <person name="Larimer F."/>
            <person name="Land M."/>
            <person name="Hauser L."/>
            <person name="Kyrpides N."/>
            <person name="Lykidis A."/>
            <person name="Tiedje J."/>
            <person name="Richardson P."/>
        </authorList>
    </citation>
    <scope>NUCLEOTIDE SEQUENCE [LARGE SCALE GENOMIC DNA]</scope>
    <source>
        <strain>W3-18-1</strain>
    </source>
</reference>
<proteinExistence type="inferred from homology"/>
<protein>
    <recommendedName>
        <fullName evidence="1">Lipoyl synthase</fullName>
        <ecNumber evidence="1">2.8.1.8</ecNumber>
    </recommendedName>
    <alternativeName>
        <fullName evidence="1">Lip-syn</fullName>
        <shortName evidence="1">LS</shortName>
    </alternativeName>
    <alternativeName>
        <fullName evidence="1">Lipoate synthase</fullName>
    </alternativeName>
    <alternativeName>
        <fullName evidence="1">Lipoic acid synthase</fullName>
    </alternativeName>
    <alternativeName>
        <fullName evidence="1">Sulfur insertion protein LipA</fullName>
    </alternativeName>
</protein>